<protein>
    <recommendedName>
        <fullName evidence="2">Small ribosomal subunit protein uS3c</fullName>
    </recommendedName>
    <alternativeName>
        <fullName>30S ribosomal protein S3, chloroplastic</fullName>
    </alternativeName>
</protein>
<feature type="chain" id="PRO_0000293934" description="Small ribosomal subunit protein uS3c">
    <location>
        <begin position="1"/>
        <end position="218"/>
    </location>
</feature>
<feature type="domain" description="KH type-2">
    <location>
        <begin position="47"/>
        <end position="118"/>
    </location>
</feature>
<gene>
    <name type="primary">rps3</name>
</gene>
<dbReference type="EMBL" id="AP009366">
    <property type="protein sequence ID" value="BAF49808.1"/>
    <property type="molecule type" value="Genomic_DNA"/>
</dbReference>
<dbReference type="RefSeq" id="YP_001122984.1">
    <property type="nucleotide sequence ID" value="NC_009265.1"/>
</dbReference>
<dbReference type="SMR" id="A4QJF3"/>
<dbReference type="GeneID" id="4968647"/>
<dbReference type="GO" id="GO:0009507">
    <property type="term" value="C:chloroplast"/>
    <property type="evidence" value="ECO:0007669"/>
    <property type="project" value="UniProtKB-SubCell"/>
</dbReference>
<dbReference type="GO" id="GO:0022627">
    <property type="term" value="C:cytosolic small ribosomal subunit"/>
    <property type="evidence" value="ECO:0007669"/>
    <property type="project" value="TreeGrafter"/>
</dbReference>
<dbReference type="GO" id="GO:0019843">
    <property type="term" value="F:rRNA binding"/>
    <property type="evidence" value="ECO:0007669"/>
    <property type="project" value="UniProtKB-UniRule"/>
</dbReference>
<dbReference type="GO" id="GO:0003735">
    <property type="term" value="F:structural constituent of ribosome"/>
    <property type="evidence" value="ECO:0007669"/>
    <property type="project" value="InterPro"/>
</dbReference>
<dbReference type="GO" id="GO:0006412">
    <property type="term" value="P:translation"/>
    <property type="evidence" value="ECO:0007669"/>
    <property type="project" value="UniProtKB-UniRule"/>
</dbReference>
<dbReference type="CDD" id="cd02412">
    <property type="entry name" value="KH-II_30S_S3"/>
    <property type="match status" value="1"/>
</dbReference>
<dbReference type="FunFam" id="3.30.1140.32:FF:000003">
    <property type="entry name" value="30S ribosomal protein S3, chloroplastic"/>
    <property type="match status" value="1"/>
</dbReference>
<dbReference type="FunFam" id="3.30.300.20:FF:000008">
    <property type="entry name" value="30S ribosomal protein S3, chloroplastic"/>
    <property type="match status" value="1"/>
</dbReference>
<dbReference type="Gene3D" id="3.30.300.20">
    <property type="match status" value="1"/>
</dbReference>
<dbReference type="Gene3D" id="3.30.1140.32">
    <property type="entry name" value="Ribosomal protein S3, C-terminal domain"/>
    <property type="match status" value="1"/>
</dbReference>
<dbReference type="HAMAP" id="MF_01309_B">
    <property type="entry name" value="Ribosomal_uS3_B"/>
    <property type="match status" value="1"/>
</dbReference>
<dbReference type="InterPro" id="IPR015946">
    <property type="entry name" value="KH_dom-like_a/b"/>
</dbReference>
<dbReference type="InterPro" id="IPR004044">
    <property type="entry name" value="KH_dom_type_2"/>
</dbReference>
<dbReference type="InterPro" id="IPR009019">
    <property type="entry name" value="KH_sf_prok-type"/>
</dbReference>
<dbReference type="InterPro" id="IPR036419">
    <property type="entry name" value="Ribosomal_S3_C_sf"/>
</dbReference>
<dbReference type="InterPro" id="IPR005704">
    <property type="entry name" value="Ribosomal_uS3_bac-typ"/>
</dbReference>
<dbReference type="InterPro" id="IPR001351">
    <property type="entry name" value="Ribosomal_uS3_C"/>
</dbReference>
<dbReference type="InterPro" id="IPR018280">
    <property type="entry name" value="Ribosomal_uS3_CS"/>
</dbReference>
<dbReference type="NCBIfam" id="TIGR01009">
    <property type="entry name" value="rpsC_bact"/>
    <property type="match status" value="1"/>
</dbReference>
<dbReference type="PANTHER" id="PTHR11760">
    <property type="entry name" value="30S/40S RIBOSOMAL PROTEIN S3"/>
    <property type="match status" value="1"/>
</dbReference>
<dbReference type="PANTHER" id="PTHR11760:SF19">
    <property type="entry name" value="SMALL RIBOSOMAL SUBUNIT PROTEIN US3C"/>
    <property type="match status" value="1"/>
</dbReference>
<dbReference type="Pfam" id="PF00189">
    <property type="entry name" value="Ribosomal_S3_C"/>
    <property type="match status" value="1"/>
</dbReference>
<dbReference type="SUPFAM" id="SSF54814">
    <property type="entry name" value="Prokaryotic type KH domain (KH-domain type II)"/>
    <property type="match status" value="1"/>
</dbReference>
<dbReference type="SUPFAM" id="SSF54821">
    <property type="entry name" value="Ribosomal protein S3 C-terminal domain"/>
    <property type="match status" value="1"/>
</dbReference>
<dbReference type="PROSITE" id="PS50823">
    <property type="entry name" value="KH_TYPE_2"/>
    <property type="match status" value="1"/>
</dbReference>
<dbReference type="PROSITE" id="PS00548">
    <property type="entry name" value="RIBOSOMAL_S3"/>
    <property type="match status" value="1"/>
</dbReference>
<geneLocation type="chloroplast"/>
<organism>
    <name type="scientific">Aethionema cordifolium</name>
    <name type="common">Lebanon stonecress</name>
    <dbReference type="NCBI Taxonomy" id="434059"/>
    <lineage>
        <taxon>Eukaryota</taxon>
        <taxon>Viridiplantae</taxon>
        <taxon>Streptophyta</taxon>
        <taxon>Embryophyta</taxon>
        <taxon>Tracheophyta</taxon>
        <taxon>Spermatophyta</taxon>
        <taxon>Magnoliopsida</taxon>
        <taxon>eudicotyledons</taxon>
        <taxon>Gunneridae</taxon>
        <taxon>Pentapetalae</taxon>
        <taxon>rosids</taxon>
        <taxon>malvids</taxon>
        <taxon>Brassicales</taxon>
        <taxon>Brassicaceae</taxon>
        <taxon>Aethionemeae</taxon>
        <taxon>Aethionema</taxon>
    </lineage>
</organism>
<proteinExistence type="inferred from homology"/>
<comment type="subunit">
    <text evidence="1">Part of the 30S ribosomal subunit.</text>
</comment>
<comment type="subcellular location">
    <subcellularLocation>
        <location>Plastid</location>
        <location>Chloroplast</location>
    </subcellularLocation>
</comment>
<comment type="similarity">
    <text evidence="2">Belongs to the universal ribosomal protein uS3 family.</text>
</comment>
<evidence type="ECO:0000250" key="1"/>
<evidence type="ECO:0000305" key="2"/>
<sequence length="218" mass="25200">MGQKINPLGFRLGTTQSHHSLWFAQPKKYCEGLEEDKKIRDCIKNYVQKNIRISSGMEGIARIEIQKRIDLIQVIIYMGFPKLLIEDKPRRVEELQMNVQKELNCVNRKLNIAITRISTPYGHPNILAEFIAGQLKNRVSFRKAMKKAIELTEQANTKGIQVQIAGRIDGKEIARVEWIREGRVPLQTIEAKIDYCSYTVRTIYGVLGIKIWIFVDEE</sequence>
<keyword id="KW-0150">Chloroplast</keyword>
<keyword id="KW-0934">Plastid</keyword>
<keyword id="KW-0687">Ribonucleoprotein</keyword>
<keyword id="KW-0689">Ribosomal protein</keyword>
<keyword id="KW-0694">RNA-binding</keyword>
<keyword id="KW-0699">rRNA-binding</keyword>
<accession>A4QJF3</accession>
<reference key="1">
    <citation type="submission" date="2007-03" db="EMBL/GenBank/DDBJ databases">
        <title>Sequencing analysis of Aethionema coridifolium chloroplast DNA.</title>
        <authorList>
            <person name="Hosouchi T."/>
            <person name="Tsuruoka H."/>
            <person name="Kotani H."/>
        </authorList>
    </citation>
    <scope>NUCLEOTIDE SEQUENCE [LARGE SCALE GENOMIC DNA]</scope>
</reference>
<name>RR3_AETCO</name>